<sequence length="232" mass="25761">MIFNVLTIFPQMFPGPLGVSNLGSALKKGLWTLNVFDIRAFANNKHNTVDDTPYGGGPGMLLRADVLGRCIDEVLSLHPNTKLMFTSPRGVSFTQDIARQTMNFDNITLLCGRFEGIDERVVDFYKLQEVSIGDYVLSGGELAAMVIIDTCVRMVPGVIGNAESLKQESMEGSLEYPQYTRPASWKGMEVPEVLLTGNHGEIEKWRRNASLSITAARRPDLLKDRYGENDVE</sequence>
<proteinExistence type="evidence at protein level"/>
<feature type="chain" id="PRO_0000257389" description="tRNA (guanine-N(1)-)-methyltransferase">
    <location>
        <begin position="1"/>
        <end position="232"/>
    </location>
</feature>
<feature type="binding site" evidence="1">
    <location>
        <position position="112"/>
    </location>
    <ligand>
        <name>S-adenosyl-L-methionine</name>
        <dbReference type="ChEBI" id="CHEBI:59789"/>
    </ligand>
</feature>
<feature type="binding site" evidence="1">
    <location>
        <begin position="132"/>
        <end position="137"/>
    </location>
    <ligand>
        <name>S-adenosyl-L-methionine</name>
        <dbReference type="ChEBI" id="CHEBI:59789"/>
    </ligand>
</feature>
<feature type="strand" evidence="2">
    <location>
        <begin position="1"/>
        <end position="8"/>
    </location>
</feature>
<feature type="helix" evidence="2">
    <location>
        <begin position="10"/>
        <end position="12"/>
    </location>
</feature>
<feature type="helix" evidence="2">
    <location>
        <begin position="15"/>
        <end position="18"/>
    </location>
</feature>
<feature type="helix" evidence="2">
    <location>
        <begin position="20"/>
        <end position="27"/>
    </location>
</feature>
<feature type="strand" evidence="2">
    <location>
        <begin position="30"/>
        <end position="37"/>
    </location>
</feature>
<feature type="helix" evidence="2">
    <location>
        <begin position="38"/>
        <end position="41"/>
    </location>
</feature>
<feature type="helix" evidence="2">
    <location>
        <begin position="45"/>
        <end position="47"/>
    </location>
</feature>
<feature type="helix" evidence="2">
    <location>
        <begin position="64"/>
        <end position="77"/>
    </location>
</feature>
<feature type="strand" evidence="2">
    <location>
        <begin position="82"/>
        <end position="86"/>
    </location>
</feature>
<feature type="strand" evidence="2">
    <location>
        <begin position="90"/>
        <end position="92"/>
    </location>
</feature>
<feature type="helix" evidence="2">
    <location>
        <begin position="95"/>
        <end position="102"/>
    </location>
</feature>
<feature type="strand" evidence="2">
    <location>
        <begin position="105"/>
        <end position="111"/>
    </location>
</feature>
<feature type="helix" evidence="2">
    <location>
        <begin position="119"/>
        <end position="125"/>
    </location>
</feature>
<feature type="strand" evidence="2">
    <location>
        <begin position="128"/>
        <end position="135"/>
    </location>
</feature>
<feature type="strand" evidence="2">
    <location>
        <begin position="138"/>
        <end position="140"/>
    </location>
</feature>
<feature type="helix" evidence="2">
    <location>
        <begin position="141"/>
        <end position="152"/>
    </location>
</feature>
<feature type="turn" evidence="2">
    <location>
        <begin position="156"/>
        <end position="158"/>
    </location>
</feature>
<feature type="helix" evidence="3">
    <location>
        <begin position="161"/>
        <end position="170"/>
    </location>
</feature>
<feature type="strand" evidence="2">
    <location>
        <begin position="183"/>
        <end position="185"/>
    </location>
</feature>
<feature type="helix" evidence="2">
    <location>
        <begin position="192"/>
        <end position="195"/>
    </location>
</feature>
<feature type="helix" evidence="2">
    <location>
        <begin position="199"/>
        <end position="209"/>
    </location>
</feature>
<feature type="helix" evidence="3">
    <location>
        <begin position="219"/>
        <end position="221"/>
    </location>
</feature>
<gene>
    <name evidence="1" type="primary">trmD</name>
    <name type="ordered locus">APH_1267</name>
</gene>
<name>TRMD_ANAPZ</name>
<comment type="function">
    <text evidence="1">Specifically methylates guanosine-37 in various tRNAs.</text>
</comment>
<comment type="catalytic activity">
    <reaction evidence="1">
        <text>guanosine(37) in tRNA + S-adenosyl-L-methionine = N(1)-methylguanosine(37) in tRNA + S-adenosyl-L-homocysteine + H(+)</text>
        <dbReference type="Rhea" id="RHEA:36899"/>
        <dbReference type="Rhea" id="RHEA-COMP:10145"/>
        <dbReference type="Rhea" id="RHEA-COMP:10147"/>
        <dbReference type="ChEBI" id="CHEBI:15378"/>
        <dbReference type="ChEBI" id="CHEBI:57856"/>
        <dbReference type="ChEBI" id="CHEBI:59789"/>
        <dbReference type="ChEBI" id="CHEBI:73542"/>
        <dbReference type="ChEBI" id="CHEBI:74269"/>
        <dbReference type="EC" id="2.1.1.228"/>
    </reaction>
</comment>
<comment type="subunit">
    <text evidence="1">Homodimer.</text>
</comment>
<comment type="subcellular location">
    <subcellularLocation>
        <location evidence="1">Cytoplasm</location>
    </subcellularLocation>
</comment>
<comment type="similarity">
    <text evidence="1">Belongs to the RNA methyltransferase TrmD family.</text>
</comment>
<keyword id="KW-0002">3D-structure</keyword>
<keyword id="KW-0963">Cytoplasm</keyword>
<keyword id="KW-0489">Methyltransferase</keyword>
<keyword id="KW-0949">S-adenosyl-L-methionine</keyword>
<keyword id="KW-0808">Transferase</keyword>
<keyword id="KW-0819">tRNA processing</keyword>
<dbReference type="EC" id="2.1.1.228" evidence="1"/>
<dbReference type="EMBL" id="CP000235">
    <property type="protein sequence ID" value="ABD43497.1"/>
    <property type="molecule type" value="Genomic_DNA"/>
</dbReference>
<dbReference type="RefSeq" id="WP_011451293.1">
    <property type="nucleotide sequence ID" value="NC_007797.1"/>
</dbReference>
<dbReference type="PDB" id="3KNU">
    <property type="method" value="X-ray"/>
    <property type="resolution" value="2.25 A"/>
    <property type="chains" value="A/B/C/D=1-232"/>
</dbReference>
<dbReference type="PDB" id="4IG6">
    <property type="method" value="X-ray"/>
    <property type="resolution" value="2.40 A"/>
    <property type="chains" value="A=1-232"/>
</dbReference>
<dbReference type="PDB" id="8SH4">
    <property type="method" value="X-ray"/>
    <property type="resolution" value="2.90 A"/>
    <property type="chains" value="A=1-217"/>
</dbReference>
<dbReference type="PDBsum" id="3KNU"/>
<dbReference type="PDBsum" id="4IG6"/>
<dbReference type="PDBsum" id="8SH4"/>
<dbReference type="SMR" id="Q2GIL5"/>
<dbReference type="STRING" id="212042.APH_1267"/>
<dbReference type="PaxDb" id="212042-APH_1267"/>
<dbReference type="EnsemblBacteria" id="ABD43497">
    <property type="protein sequence ID" value="ABD43497"/>
    <property type="gene ID" value="APH_1267"/>
</dbReference>
<dbReference type="GeneID" id="92747854"/>
<dbReference type="KEGG" id="aph:APH_1267"/>
<dbReference type="eggNOG" id="COG0336">
    <property type="taxonomic scope" value="Bacteria"/>
</dbReference>
<dbReference type="HOGENOM" id="CLU_047363_0_1_5"/>
<dbReference type="EvolutionaryTrace" id="Q2GIL5"/>
<dbReference type="Proteomes" id="UP000001943">
    <property type="component" value="Chromosome"/>
</dbReference>
<dbReference type="GO" id="GO:0005829">
    <property type="term" value="C:cytosol"/>
    <property type="evidence" value="ECO:0007669"/>
    <property type="project" value="TreeGrafter"/>
</dbReference>
<dbReference type="GO" id="GO:0052906">
    <property type="term" value="F:tRNA (guanine(37)-N1)-methyltransferase activity"/>
    <property type="evidence" value="ECO:0007669"/>
    <property type="project" value="UniProtKB-UniRule"/>
</dbReference>
<dbReference type="GO" id="GO:0002939">
    <property type="term" value="P:tRNA N1-guanine methylation"/>
    <property type="evidence" value="ECO:0007669"/>
    <property type="project" value="TreeGrafter"/>
</dbReference>
<dbReference type="CDD" id="cd18080">
    <property type="entry name" value="TrmD-like"/>
    <property type="match status" value="1"/>
</dbReference>
<dbReference type="FunFam" id="3.40.1280.10:FF:000001">
    <property type="entry name" value="tRNA (guanine-N(1)-)-methyltransferase"/>
    <property type="match status" value="1"/>
</dbReference>
<dbReference type="Gene3D" id="3.40.1280.10">
    <property type="match status" value="1"/>
</dbReference>
<dbReference type="Gene3D" id="1.10.1270.20">
    <property type="entry name" value="tRNA(m1g37)methyltransferase, domain 2"/>
    <property type="match status" value="1"/>
</dbReference>
<dbReference type="HAMAP" id="MF_00605">
    <property type="entry name" value="TrmD"/>
    <property type="match status" value="1"/>
</dbReference>
<dbReference type="InterPro" id="IPR029028">
    <property type="entry name" value="Alpha/beta_knot_MTases"/>
</dbReference>
<dbReference type="InterPro" id="IPR023148">
    <property type="entry name" value="tRNA_m1G_MeTrfase_C_sf"/>
</dbReference>
<dbReference type="InterPro" id="IPR002649">
    <property type="entry name" value="tRNA_m1G_MeTrfase_TrmD"/>
</dbReference>
<dbReference type="InterPro" id="IPR029026">
    <property type="entry name" value="tRNA_m1G_MTases_N"/>
</dbReference>
<dbReference type="InterPro" id="IPR016009">
    <property type="entry name" value="tRNA_MeTrfase_TRMD/TRM10"/>
</dbReference>
<dbReference type="NCBIfam" id="NF000648">
    <property type="entry name" value="PRK00026.1"/>
    <property type="match status" value="1"/>
</dbReference>
<dbReference type="NCBIfam" id="TIGR00088">
    <property type="entry name" value="trmD"/>
    <property type="match status" value="1"/>
</dbReference>
<dbReference type="PANTHER" id="PTHR46417">
    <property type="entry name" value="TRNA (GUANINE-N(1)-)-METHYLTRANSFERASE"/>
    <property type="match status" value="1"/>
</dbReference>
<dbReference type="PANTHER" id="PTHR46417:SF1">
    <property type="entry name" value="TRNA (GUANINE-N(1)-)-METHYLTRANSFERASE"/>
    <property type="match status" value="1"/>
</dbReference>
<dbReference type="Pfam" id="PF01746">
    <property type="entry name" value="tRNA_m1G_MT"/>
    <property type="match status" value="1"/>
</dbReference>
<dbReference type="PIRSF" id="PIRSF000386">
    <property type="entry name" value="tRNA_mtase"/>
    <property type="match status" value="1"/>
</dbReference>
<dbReference type="SUPFAM" id="SSF75217">
    <property type="entry name" value="alpha/beta knot"/>
    <property type="match status" value="1"/>
</dbReference>
<reference key="1">
    <citation type="journal article" date="2006" name="PLoS Genet.">
        <title>Comparative genomics of emerging human ehrlichiosis agents.</title>
        <authorList>
            <person name="Dunning Hotopp J.C."/>
            <person name="Lin M."/>
            <person name="Madupu R."/>
            <person name="Crabtree J."/>
            <person name="Angiuoli S.V."/>
            <person name="Eisen J.A."/>
            <person name="Seshadri R."/>
            <person name="Ren Q."/>
            <person name="Wu M."/>
            <person name="Utterback T.R."/>
            <person name="Smith S."/>
            <person name="Lewis M."/>
            <person name="Khouri H."/>
            <person name="Zhang C."/>
            <person name="Niu H."/>
            <person name="Lin Q."/>
            <person name="Ohashi N."/>
            <person name="Zhi N."/>
            <person name="Nelson W.C."/>
            <person name="Brinkac L.M."/>
            <person name="Dodson R.J."/>
            <person name="Rosovitz M.J."/>
            <person name="Sundaram J.P."/>
            <person name="Daugherty S.C."/>
            <person name="Davidsen T."/>
            <person name="Durkin A.S."/>
            <person name="Gwinn M.L."/>
            <person name="Haft D.H."/>
            <person name="Selengut J.D."/>
            <person name="Sullivan S.A."/>
            <person name="Zafar N."/>
            <person name="Zhou L."/>
            <person name="Benahmed F."/>
            <person name="Forberger H."/>
            <person name="Halpin R."/>
            <person name="Mulligan S."/>
            <person name="Robinson J."/>
            <person name="White O."/>
            <person name="Rikihisa Y."/>
            <person name="Tettelin H."/>
        </authorList>
    </citation>
    <scope>NUCLEOTIDE SEQUENCE [LARGE SCALE GENOMIC DNA]</scope>
    <source>
        <strain>HZ</strain>
    </source>
</reference>
<protein>
    <recommendedName>
        <fullName evidence="1">tRNA (guanine-N(1)-)-methyltransferase</fullName>
        <ecNumber evidence="1">2.1.1.228</ecNumber>
    </recommendedName>
    <alternativeName>
        <fullName evidence="1">M1G-methyltransferase</fullName>
    </alternativeName>
    <alternativeName>
        <fullName evidence="1">tRNA [GM37] methyltransferase</fullName>
    </alternativeName>
</protein>
<evidence type="ECO:0000255" key="1">
    <source>
        <dbReference type="HAMAP-Rule" id="MF_00605"/>
    </source>
</evidence>
<evidence type="ECO:0007829" key="2">
    <source>
        <dbReference type="PDB" id="3KNU"/>
    </source>
</evidence>
<evidence type="ECO:0007829" key="3">
    <source>
        <dbReference type="PDB" id="4IG6"/>
    </source>
</evidence>
<accession>Q2GIL5</accession>
<organism>
    <name type="scientific">Anaplasma phagocytophilum (strain HZ)</name>
    <dbReference type="NCBI Taxonomy" id="212042"/>
    <lineage>
        <taxon>Bacteria</taxon>
        <taxon>Pseudomonadati</taxon>
        <taxon>Pseudomonadota</taxon>
        <taxon>Alphaproteobacteria</taxon>
        <taxon>Rickettsiales</taxon>
        <taxon>Anaplasmataceae</taxon>
        <taxon>Anaplasma</taxon>
        <taxon>phagocytophilum group</taxon>
    </lineage>
</organism>